<name>Y461_MYCPN</name>
<reference key="1">
    <citation type="journal article" date="1996" name="Nucleic Acids Res.">
        <title>Complete sequence analysis of the genome of the bacterium Mycoplasma pneumoniae.</title>
        <authorList>
            <person name="Himmelreich R."/>
            <person name="Hilbert H."/>
            <person name="Plagens H."/>
            <person name="Pirkl E."/>
            <person name="Li B.-C."/>
            <person name="Herrmann R."/>
        </authorList>
    </citation>
    <scope>NUCLEOTIDE SEQUENCE [LARGE SCALE GENOMIC DNA]</scope>
    <source>
        <strain>ATCC 29342 / M129 / Subtype 1</strain>
    </source>
</reference>
<feature type="chain" id="PRO_0000210540" description="Uncharacterized protein MG323 homolog">
    <location>
        <begin position="1"/>
        <end position="231"/>
    </location>
</feature>
<feature type="domain" description="RCK N-terminal" evidence="1">
    <location>
        <begin position="3"/>
        <end position="119"/>
    </location>
</feature>
<feature type="domain" description="RCK C-terminal" evidence="2">
    <location>
        <begin position="134"/>
        <end position="221"/>
    </location>
</feature>
<accession>P75322</accession>
<gene>
    <name type="ordered locus">MPN_461</name>
    <name type="ORF">H08_orf231</name>
    <name type="ORF">MP380</name>
</gene>
<evidence type="ECO:0000255" key="1">
    <source>
        <dbReference type="PROSITE-ProRule" id="PRU00543"/>
    </source>
</evidence>
<evidence type="ECO:0000255" key="2">
    <source>
        <dbReference type="PROSITE-ProRule" id="PRU00544"/>
    </source>
</evidence>
<keyword id="KW-1185">Reference proteome</keyword>
<protein>
    <recommendedName>
        <fullName>Uncharacterized protein MG323 homolog</fullName>
    </recommendedName>
</protein>
<dbReference type="EMBL" id="U00089">
    <property type="protein sequence ID" value="AAB96028.1"/>
    <property type="molecule type" value="Genomic_DNA"/>
</dbReference>
<dbReference type="PIR" id="S73706">
    <property type="entry name" value="S73706"/>
</dbReference>
<dbReference type="RefSeq" id="NP_110149.1">
    <property type="nucleotide sequence ID" value="NC_000912.1"/>
</dbReference>
<dbReference type="RefSeq" id="WP_010874817.1">
    <property type="nucleotide sequence ID" value="NZ_OU342337.1"/>
</dbReference>
<dbReference type="SMR" id="P75322"/>
<dbReference type="IntAct" id="P75322">
    <property type="interactions" value="2"/>
</dbReference>
<dbReference type="STRING" id="272634.MPN_461"/>
<dbReference type="EnsemblBacteria" id="AAB96028">
    <property type="protein sequence ID" value="AAB96028"/>
    <property type="gene ID" value="MPN_461"/>
</dbReference>
<dbReference type="KEGG" id="mpn:MPN_461"/>
<dbReference type="PATRIC" id="fig|272634.6.peg.498"/>
<dbReference type="HOGENOM" id="CLU_046525_3_2_14"/>
<dbReference type="OrthoDB" id="9776294at2"/>
<dbReference type="BioCyc" id="MPNE272634:G1GJ3-755-MONOMER"/>
<dbReference type="Proteomes" id="UP000000808">
    <property type="component" value="Chromosome"/>
</dbReference>
<dbReference type="GO" id="GO:0008324">
    <property type="term" value="F:monoatomic cation transmembrane transporter activity"/>
    <property type="evidence" value="ECO:0007669"/>
    <property type="project" value="InterPro"/>
</dbReference>
<dbReference type="GO" id="GO:0006813">
    <property type="term" value="P:potassium ion transport"/>
    <property type="evidence" value="ECO:0007669"/>
    <property type="project" value="InterPro"/>
</dbReference>
<dbReference type="Gene3D" id="3.40.50.720">
    <property type="entry name" value="NAD(P)-binding Rossmann-like Domain"/>
    <property type="match status" value="1"/>
</dbReference>
<dbReference type="Gene3D" id="3.30.70.1450">
    <property type="entry name" value="Regulator of K+ conductance, C-terminal domain"/>
    <property type="match status" value="1"/>
</dbReference>
<dbReference type="InterPro" id="IPR036291">
    <property type="entry name" value="NAD(P)-bd_dom_sf"/>
</dbReference>
<dbReference type="InterPro" id="IPR006037">
    <property type="entry name" value="RCK_C"/>
</dbReference>
<dbReference type="InterPro" id="IPR036721">
    <property type="entry name" value="RCK_C_sf"/>
</dbReference>
<dbReference type="InterPro" id="IPR003148">
    <property type="entry name" value="RCK_N"/>
</dbReference>
<dbReference type="InterPro" id="IPR050721">
    <property type="entry name" value="Trk_Ktr_HKT_K-transport"/>
</dbReference>
<dbReference type="PANTHER" id="PTHR43833:SF7">
    <property type="entry name" value="KTR SYSTEM POTASSIUM UPTAKE PROTEIN C"/>
    <property type="match status" value="1"/>
</dbReference>
<dbReference type="PANTHER" id="PTHR43833">
    <property type="entry name" value="POTASSIUM CHANNEL PROTEIN 2-RELATED-RELATED"/>
    <property type="match status" value="1"/>
</dbReference>
<dbReference type="Pfam" id="PF02080">
    <property type="entry name" value="TrkA_C"/>
    <property type="match status" value="1"/>
</dbReference>
<dbReference type="Pfam" id="PF02254">
    <property type="entry name" value="TrkA_N"/>
    <property type="match status" value="1"/>
</dbReference>
<dbReference type="SUPFAM" id="SSF51735">
    <property type="entry name" value="NAD(P)-binding Rossmann-fold domains"/>
    <property type="match status" value="1"/>
</dbReference>
<dbReference type="SUPFAM" id="SSF116726">
    <property type="entry name" value="TrkA C-terminal domain-like"/>
    <property type="match status" value="1"/>
</dbReference>
<dbReference type="PROSITE" id="PS51202">
    <property type="entry name" value="RCK_C"/>
    <property type="match status" value="1"/>
</dbReference>
<dbReference type="PROSITE" id="PS51201">
    <property type="entry name" value="RCK_N"/>
    <property type="match status" value="1"/>
</dbReference>
<proteinExistence type="predicted"/>
<organism>
    <name type="scientific">Mycoplasma pneumoniae (strain ATCC 29342 / M129 / Subtype 1)</name>
    <name type="common">Mycoplasmoides pneumoniae</name>
    <dbReference type="NCBI Taxonomy" id="272634"/>
    <lineage>
        <taxon>Bacteria</taxon>
        <taxon>Bacillati</taxon>
        <taxon>Mycoplasmatota</taxon>
        <taxon>Mycoplasmoidales</taxon>
        <taxon>Mycoplasmoidaceae</taxon>
        <taxon>Mycoplasmoides</taxon>
    </lineage>
</organism>
<sequence length="231" mass="25773">MKRADFCIIGLGRFGMQVAHSLKENNFTLVLIDNDQHKTNTAAQEFDHVVCCDGSNLTALAELQLEEFSAVIVGVTNIEASIMICANLRELGQKNIIARAKNEVHNRVLRTMGIREALIPEKIVGKNLVIRLIHGMETEIINLGNDILFVRAPVNNKKLFNRTLGEINIREHTNANLISIMRNGKDVVFPLGPNTQIQPGDVITAVCQLSGVNQYLRYINPNDKNKYKASE</sequence>